<gene>
    <name type="primary">OPG019</name>
    <name type="ORF">MPXVgp014</name>
</gene>
<reference key="1">
    <citation type="journal article" date="2022" name="J. Infect. Dis.">
        <title>Exportation of Monkeypox virus from the African continent.</title>
        <authorList>
            <person name="Mauldin M.R."/>
            <person name="McCollum A.M."/>
            <person name="Nakazawa Y.J."/>
            <person name="Mandra A."/>
            <person name="Whitehouse E.R."/>
            <person name="Davidson W."/>
            <person name="Zhao H."/>
            <person name="Gao J."/>
            <person name="Li Y."/>
            <person name="Doty J."/>
            <person name="Yinka-Ogunleye A."/>
            <person name="Akinpelu A."/>
            <person name="Aruna O."/>
            <person name="Naidoo D."/>
            <person name="Lewandowski K."/>
            <person name="Afrough B."/>
            <person name="Graham V."/>
            <person name="Aarons E."/>
            <person name="Hewson R."/>
            <person name="Vipond R."/>
            <person name="Dunning J."/>
            <person name="Chand M."/>
            <person name="Brown C."/>
            <person name="Cohen-Gihon I."/>
            <person name="Erez N."/>
            <person name="Shifman O."/>
            <person name="Israeli O."/>
            <person name="Sharon M."/>
            <person name="Schwartz E."/>
            <person name="Beth-Din A."/>
            <person name="Zvi A."/>
            <person name="Mak T.M."/>
            <person name="Ng Y.K."/>
            <person name="Cui L."/>
            <person name="Lin R.T.P."/>
            <person name="Olson V.A."/>
            <person name="Brooks T."/>
            <person name="Paran N."/>
            <person name="Ihekweazu C."/>
            <person name="Reynolds M.G."/>
        </authorList>
    </citation>
    <scope>NUCLEOTIDE SEQUENCE [LARGE SCALE GENOMIC DNA]</scope>
    <source>
        <strain>MPXV-M5312_HM12_Rivers</strain>
    </source>
</reference>
<name>PG029_MONPV</name>
<accession>A0A7H0DN03</accession>
<organismHost>
    <name type="scientific">Cynomys gunnisoni</name>
    <name type="common">Gunnison's prairie dog</name>
    <name type="synonym">Spermophilus gunnisoni</name>
    <dbReference type="NCBI Taxonomy" id="45479"/>
</organismHost>
<organismHost>
    <name type="scientific">Cynomys leucurus</name>
    <name type="common">White-tailed prairie dog</name>
    <dbReference type="NCBI Taxonomy" id="99825"/>
</organismHost>
<organismHost>
    <name type="scientific">Cynomys ludovicianus</name>
    <name type="common">Black-tailed prairie dog</name>
    <dbReference type="NCBI Taxonomy" id="45480"/>
</organismHost>
<organismHost>
    <name type="scientific">Cynomys mexicanus</name>
    <name type="common">Mexican prairie dog</name>
    <dbReference type="NCBI Taxonomy" id="99826"/>
</organismHost>
<organismHost>
    <name type="scientific">Cynomys parvidens</name>
    <name type="common">Utah prairie dog</name>
    <dbReference type="NCBI Taxonomy" id="99827"/>
</organismHost>
<organismHost>
    <name type="scientific">Gliridae</name>
    <name type="common">dormice</name>
    <dbReference type="NCBI Taxonomy" id="30650"/>
</organismHost>
<organismHost>
    <name type="scientific">Heliosciurus ruwenzorii</name>
    <name type="common">Ruwenzori sun squirrel</name>
    <dbReference type="NCBI Taxonomy" id="226685"/>
</organismHost>
<organismHost>
    <name type="scientific">Homo sapiens</name>
    <name type="common">Human</name>
    <dbReference type="NCBI Taxonomy" id="9606"/>
</organismHost>
<organismHost>
    <name type="scientific">Mus musculus</name>
    <name type="common">Mouse</name>
    <dbReference type="NCBI Taxonomy" id="10090"/>
</organismHost>
<comment type="function">
    <text evidence="1">Prevents establishment of cellular antiviral state by blocking virus-induced phosphorylation and activation of interferon regulatory factors 3/IRF3 and 7/IRF7, transcription factors critical for the induction of interferons alpha and beta. This blockage is produced through the inhibition of host TBK1, by binding host TBK1 adapter proteins TBKBP1 and AZI2, thereby producing a strong inhibition of the phosphorylation and activation of IRF3 and IRF7. Also acts as an inhibitor of the cellular response to type I IFN by interacting with host STAT2. Mechanistically, exerts its inhibitory effect after host ISGF3 complex (composed of STAT1, STAT2 and IRF9) binding to the interferon stimulated response element (ISRE).</text>
</comment>
<comment type="subunit">
    <text evidence="1">Interacts with host TANK, TBKBP1 and AZI2; these interactions prevent interferon production. Interacts with host STAT2.</text>
</comment>
<comment type="induction">
    <text evidence="1">Expressed in the early phase of the viral replicative cycle.</text>
</comment>
<comment type="similarity">
    <text evidence="2">Belongs to the orthopoxvirus OPG029 family.</text>
</comment>
<proteinExistence type="inferred from homology"/>
<evidence type="ECO:0000250" key="1">
    <source>
        <dbReference type="UniProtKB" id="P17362"/>
    </source>
</evidence>
<evidence type="ECO:0000305" key="2"/>
<keyword id="KW-0244">Early protein</keyword>
<keyword id="KW-0945">Host-virus interaction</keyword>
<keyword id="KW-1090">Inhibition of host innate immune response by virus</keyword>
<keyword id="KW-1114">Inhibition of host interferon signaling pathway by virus</keyword>
<keyword id="KW-1223">Inhibition of host TBK1 by virus</keyword>
<keyword id="KW-1225">Inhibition of host TLR pathway by virus</keyword>
<keyword id="KW-0922">Interferon antiviral system evasion</keyword>
<keyword id="KW-1185">Reference proteome</keyword>
<keyword id="KW-0899">Viral immunoevasion</keyword>
<protein>
    <recommendedName>
        <fullName>IFN signaling evasion protein OPG029</fullName>
    </recommendedName>
</protein>
<dbReference type="EMBL" id="MT903340">
    <property type="protein sequence ID" value="QNP12886.1"/>
    <property type="molecule type" value="Genomic_DNA"/>
</dbReference>
<dbReference type="SMR" id="A0A7H0DN03"/>
<dbReference type="Proteomes" id="UP000516359">
    <property type="component" value="Genome"/>
</dbReference>
<dbReference type="GO" id="GO:0039723">
    <property type="term" value="P:symbiont-mediated suppression of host cytoplasmic pattern recognition receptor signaling pathway via inhibition of TBK1 activity"/>
    <property type="evidence" value="ECO:0007669"/>
    <property type="project" value="UniProtKB-KW"/>
</dbReference>
<dbReference type="GO" id="GO:0039722">
    <property type="term" value="P:symbiont-mediated suppression of host toll-like receptor signaling pathway"/>
    <property type="evidence" value="ECO:0007669"/>
    <property type="project" value="UniProtKB-KW"/>
</dbReference>
<dbReference type="GO" id="GO:0039502">
    <property type="term" value="P:symbiont-mediated suppression of host type I interferon-mediated signaling pathway"/>
    <property type="evidence" value="ECO:0007669"/>
    <property type="project" value="UniProtKB-KW"/>
</dbReference>
<dbReference type="Gene3D" id="1.10.437.20">
    <property type="entry name" value="dsDNA poxvirus"/>
    <property type="match status" value="1"/>
</dbReference>
<dbReference type="InterPro" id="IPR022819">
    <property type="entry name" value="Poxvirus_Bcl-2-like"/>
</dbReference>
<dbReference type="InterPro" id="IPR043018">
    <property type="entry name" value="Poxvirus_sf"/>
</dbReference>
<dbReference type="Pfam" id="PF06227">
    <property type="entry name" value="Poxv_Bcl-2-like"/>
    <property type="match status" value="1"/>
</dbReference>
<sequence>MNVYNKADSFSLESDSIKDVIHDYICWLSMTDETRPSIGNVFTAMETFKIDAVRYYDGNIYDLAKDINTMSFDSFIRSLQNITSKKDKLTVYGTMGLLSIVVDINKGRDVSNIKFAAGIIILMEYIFDDTDLSHLKIALYRRIQRCYPIDDDDDR</sequence>
<organism>
    <name type="scientific">Monkeypox virus</name>
    <dbReference type="NCBI Taxonomy" id="10244"/>
    <lineage>
        <taxon>Viruses</taxon>
        <taxon>Varidnaviria</taxon>
        <taxon>Bamfordvirae</taxon>
        <taxon>Nucleocytoviricota</taxon>
        <taxon>Pokkesviricetes</taxon>
        <taxon>Chitovirales</taxon>
        <taxon>Poxviridae</taxon>
        <taxon>Chordopoxvirinae</taxon>
        <taxon>Orthopoxvirus</taxon>
    </lineage>
</organism>
<feature type="chain" id="PRO_0000457194" description="IFN signaling evasion protein OPG029">
    <location>
        <begin position="1"/>
        <end position="155"/>
    </location>
</feature>